<keyword id="KW-0067">ATP-binding</keyword>
<keyword id="KW-0119">Carbohydrate metabolism</keyword>
<keyword id="KW-0418">Kinase</keyword>
<keyword id="KW-0511">Multifunctional enzyme</keyword>
<keyword id="KW-0547">Nucleotide-binding</keyword>
<keyword id="KW-0548">Nucleotidyltransferase</keyword>
<keyword id="KW-1185">Reference proteome</keyword>
<keyword id="KW-0808">Transferase</keyword>
<reference key="1">
    <citation type="submission" date="2006-12" db="EMBL/GenBank/DDBJ databases">
        <title>Complete sequence of Halorhodospira halophila SL1.</title>
        <authorList>
            <consortium name="US DOE Joint Genome Institute"/>
            <person name="Copeland A."/>
            <person name="Lucas S."/>
            <person name="Lapidus A."/>
            <person name="Barry K."/>
            <person name="Detter J.C."/>
            <person name="Glavina del Rio T."/>
            <person name="Hammon N."/>
            <person name="Israni S."/>
            <person name="Dalin E."/>
            <person name="Tice H."/>
            <person name="Pitluck S."/>
            <person name="Saunders E."/>
            <person name="Brettin T."/>
            <person name="Bruce D."/>
            <person name="Han C."/>
            <person name="Tapia R."/>
            <person name="Schmutz J."/>
            <person name="Larimer F."/>
            <person name="Land M."/>
            <person name="Hauser L."/>
            <person name="Kyrpides N."/>
            <person name="Mikhailova N."/>
            <person name="Hoff W."/>
            <person name="Richardson P."/>
        </authorList>
    </citation>
    <scope>NUCLEOTIDE SEQUENCE [LARGE SCALE GENOMIC DNA]</scope>
    <source>
        <strain>DSM 244 / SL1</strain>
    </source>
</reference>
<proteinExistence type="inferred from homology"/>
<feature type="chain" id="PRO_0000291675" description="Bifunctional protein HldE">
    <location>
        <begin position="1"/>
        <end position="477"/>
    </location>
</feature>
<feature type="region of interest" description="Ribokinase">
    <location>
        <begin position="1"/>
        <end position="319"/>
    </location>
</feature>
<feature type="region of interest" description="Cytidylyltransferase">
    <location>
        <begin position="346"/>
        <end position="477"/>
    </location>
</feature>
<feature type="active site" evidence="1">
    <location>
        <position position="264"/>
    </location>
</feature>
<feature type="binding site" evidence="1">
    <location>
        <begin position="195"/>
        <end position="198"/>
    </location>
    <ligand>
        <name>ATP</name>
        <dbReference type="ChEBI" id="CHEBI:30616"/>
    </ligand>
</feature>
<dbReference type="EC" id="2.7.1.167" evidence="1"/>
<dbReference type="EC" id="2.7.7.70" evidence="1"/>
<dbReference type="EMBL" id="CP000544">
    <property type="protein sequence ID" value="ABM63025.1"/>
    <property type="molecule type" value="Genomic_DNA"/>
</dbReference>
<dbReference type="RefSeq" id="WP_011815047.1">
    <property type="nucleotide sequence ID" value="NC_008789.1"/>
</dbReference>
<dbReference type="SMR" id="A1WZB3"/>
<dbReference type="STRING" id="349124.Hhal_2261"/>
<dbReference type="KEGG" id="hha:Hhal_2261"/>
<dbReference type="eggNOG" id="COG0615">
    <property type="taxonomic scope" value="Bacteria"/>
</dbReference>
<dbReference type="eggNOG" id="COG2870">
    <property type="taxonomic scope" value="Bacteria"/>
</dbReference>
<dbReference type="HOGENOM" id="CLU_021150_2_1_6"/>
<dbReference type="OrthoDB" id="9802794at2"/>
<dbReference type="UniPathway" id="UPA00356">
    <property type="reaction ID" value="UER00437"/>
</dbReference>
<dbReference type="UniPathway" id="UPA00356">
    <property type="reaction ID" value="UER00439"/>
</dbReference>
<dbReference type="Proteomes" id="UP000000647">
    <property type="component" value="Chromosome"/>
</dbReference>
<dbReference type="GO" id="GO:0005829">
    <property type="term" value="C:cytosol"/>
    <property type="evidence" value="ECO:0007669"/>
    <property type="project" value="TreeGrafter"/>
</dbReference>
<dbReference type="GO" id="GO:0005524">
    <property type="term" value="F:ATP binding"/>
    <property type="evidence" value="ECO:0007669"/>
    <property type="project" value="UniProtKB-UniRule"/>
</dbReference>
<dbReference type="GO" id="GO:0033785">
    <property type="term" value="F:heptose 7-phosphate kinase activity"/>
    <property type="evidence" value="ECO:0007669"/>
    <property type="project" value="UniProtKB-UniRule"/>
</dbReference>
<dbReference type="GO" id="GO:0033786">
    <property type="term" value="F:heptose-1-phosphate adenylyltransferase activity"/>
    <property type="evidence" value="ECO:0007669"/>
    <property type="project" value="UniProtKB-UniRule"/>
</dbReference>
<dbReference type="GO" id="GO:0016773">
    <property type="term" value="F:phosphotransferase activity, alcohol group as acceptor"/>
    <property type="evidence" value="ECO:0007669"/>
    <property type="project" value="InterPro"/>
</dbReference>
<dbReference type="GO" id="GO:0097171">
    <property type="term" value="P:ADP-L-glycero-beta-D-manno-heptose biosynthetic process"/>
    <property type="evidence" value="ECO:0007669"/>
    <property type="project" value="UniProtKB-UniPathway"/>
</dbReference>
<dbReference type="CDD" id="cd01172">
    <property type="entry name" value="RfaE_like"/>
    <property type="match status" value="1"/>
</dbReference>
<dbReference type="FunFam" id="3.40.1190.20:FF:000002">
    <property type="entry name" value="Bifunctional protein HldE"/>
    <property type="match status" value="1"/>
</dbReference>
<dbReference type="FunFam" id="3.40.50.620:FF:000028">
    <property type="entry name" value="Bifunctional protein HldE"/>
    <property type="match status" value="1"/>
</dbReference>
<dbReference type="Gene3D" id="3.40.1190.20">
    <property type="match status" value="1"/>
</dbReference>
<dbReference type="Gene3D" id="3.40.50.620">
    <property type="entry name" value="HUPs"/>
    <property type="match status" value="1"/>
</dbReference>
<dbReference type="HAMAP" id="MF_01603">
    <property type="entry name" value="HldE"/>
    <property type="match status" value="1"/>
</dbReference>
<dbReference type="InterPro" id="IPR023030">
    <property type="entry name" value="Bifunc_HldE"/>
</dbReference>
<dbReference type="InterPro" id="IPR002173">
    <property type="entry name" value="Carboh/pur_kinase_PfkB_CS"/>
</dbReference>
<dbReference type="InterPro" id="IPR004821">
    <property type="entry name" value="Cyt_trans-like"/>
</dbReference>
<dbReference type="InterPro" id="IPR011611">
    <property type="entry name" value="PfkB_dom"/>
</dbReference>
<dbReference type="InterPro" id="IPR011913">
    <property type="entry name" value="RfaE_dom_I"/>
</dbReference>
<dbReference type="InterPro" id="IPR011914">
    <property type="entry name" value="RfaE_dom_II"/>
</dbReference>
<dbReference type="InterPro" id="IPR029056">
    <property type="entry name" value="Ribokinase-like"/>
</dbReference>
<dbReference type="InterPro" id="IPR014729">
    <property type="entry name" value="Rossmann-like_a/b/a_fold"/>
</dbReference>
<dbReference type="NCBIfam" id="TIGR00125">
    <property type="entry name" value="cyt_tran_rel"/>
    <property type="match status" value="1"/>
</dbReference>
<dbReference type="NCBIfam" id="NF008454">
    <property type="entry name" value="PRK11316.1"/>
    <property type="match status" value="1"/>
</dbReference>
<dbReference type="NCBIfam" id="TIGR02198">
    <property type="entry name" value="rfaE_dom_I"/>
    <property type="match status" value="1"/>
</dbReference>
<dbReference type="NCBIfam" id="TIGR02199">
    <property type="entry name" value="rfaE_dom_II"/>
    <property type="match status" value="1"/>
</dbReference>
<dbReference type="PANTHER" id="PTHR46969">
    <property type="entry name" value="BIFUNCTIONAL PROTEIN HLDE"/>
    <property type="match status" value="1"/>
</dbReference>
<dbReference type="PANTHER" id="PTHR46969:SF1">
    <property type="entry name" value="BIFUNCTIONAL PROTEIN HLDE"/>
    <property type="match status" value="1"/>
</dbReference>
<dbReference type="Pfam" id="PF01467">
    <property type="entry name" value="CTP_transf_like"/>
    <property type="match status" value="1"/>
</dbReference>
<dbReference type="Pfam" id="PF00294">
    <property type="entry name" value="PfkB"/>
    <property type="match status" value="1"/>
</dbReference>
<dbReference type="SUPFAM" id="SSF52374">
    <property type="entry name" value="Nucleotidylyl transferase"/>
    <property type="match status" value="1"/>
</dbReference>
<dbReference type="SUPFAM" id="SSF53613">
    <property type="entry name" value="Ribokinase-like"/>
    <property type="match status" value="1"/>
</dbReference>
<dbReference type="PROSITE" id="PS00583">
    <property type="entry name" value="PFKB_KINASES_1"/>
    <property type="match status" value="1"/>
</dbReference>
<gene>
    <name evidence="1" type="primary">hldE</name>
    <name type="ordered locus">Hhal_2261</name>
</gene>
<accession>A1WZB3</accession>
<protein>
    <recommendedName>
        <fullName evidence="1">Bifunctional protein HldE</fullName>
    </recommendedName>
    <domain>
        <recommendedName>
            <fullName evidence="1">D-beta-D-heptose 7-phosphate kinase</fullName>
            <ecNumber evidence="1">2.7.1.167</ecNumber>
        </recommendedName>
        <alternativeName>
            <fullName evidence="1">D-beta-D-heptose 7-phosphotransferase</fullName>
        </alternativeName>
        <alternativeName>
            <fullName evidence="1">D-glycero-beta-D-manno-heptose-7-phosphate kinase</fullName>
        </alternativeName>
    </domain>
    <domain>
        <recommendedName>
            <fullName evidence="1">D-beta-D-heptose 1-phosphate adenylyltransferase</fullName>
            <ecNumber evidence="1">2.7.7.70</ecNumber>
        </recommendedName>
        <alternativeName>
            <fullName evidence="1">D-glycero-beta-D-manno-heptose 1-phosphate adenylyltransferase</fullName>
        </alternativeName>
    </domain>
</protein>
<organism>
    <name type="scientific">Halorhodospira halophila (strain DSM 244 / SL1)</name>
    <name type="common">Ectothiorhodospira halophila (strain DSM 244 / SL1)</name>
    <dbReference type="NCBI Taxonomy" id="349124"/>
    <lineage>
        <taxon>Bacteria</taxon>
        <taxon>Pseudomonadati</taxon>
        <taxon>Pseudomonadota</taxon>
        <taxon>Gammaproteobacteria</taxon>
        <taxon>Chromatiales</taxon>
        <taxon>Ectothiorhodospiraceae</taxon>
        <taxon>Halorhodospira</taxon>
    </lineage>
</organism>
<sequence length="477" mass="49378">MTPPLPGFRDVRVVVAGDLMLDRYWHGATQRISPEAPVPVVRVDGAEERPGGAANVALNVAALGGEAQVVGPTGSDEAADRLAELLEAAGVGQRFHRIAGADTITKLRVISRHQQLIRLDFERGFPGFDHAAMLALLEPALADAAVLVLSDYAKGALPDPAGLIEAARRAGRPVLVDPKGADYRRYRGASLLTPNLAEFEAVVGPCADGDEIAKRARQLAADLELEALLVTRGEAGMTLAPREGVAVHLPTRAREVFDVTGAGDTVIATLAAALGAGVDLADASALANVAAGVVVGKLGTATVTPAELEAALGGGPAPAAGSGVVDEPGLLAAVRQARAAGERIVMTNGCFDLLHAGHVDYLQRARRRGERLVVAVNDDASVARLKGAERPVTPLAQRMAVLAALDTVDWVVPFSEDTPARLIEAVLPDRLVKGGDYQPEQIAGHDVVVAAGGSVEVLPLLAGASTTDLIARIRSRG</sequence>
<name>HLDE_HALHL</name>
<comment type="function">
    <text evidence="1">Catalyzes the phosphorylation of D-glycero-D-manno-heptose 7-phosphate at the C-1 position to selectively form D-glycero-beta-D-manno-heptose-1,7-bisphosphate.</text>
</comment>
<comment type="function">
    <text evidence="1">Catalyzes the ADP transfer from ATP to D-glycero-beta-D-manno-heptose 1-phosphate, yielding ADP-D-glycero-beta-D-manno-heptose.</text>
</comment>
<comment type="catalytic activity">
    <reaction evidence="1">
        <text>D-glycero-beta-D-manno-heptose 7-phosphate + ATP = D-glycero-beta-D-manno-heptose 1,7-bisphosphate + ADP + H(+)</text>
        <dbReference type="Rhea" id="RHEA:27473"/>
        <dbReference type="ChEBI" id="CHEBI:15378"/>
        <dbReference type="ChEBI" id="CHEBI:30616"/>
        <dbReference type="ChEBI" id="CHEBI:60204"/>
        <dbReference type="ChEBI" id="CHEBI:60208"/>
        <dbReference type="ChEBI" id="CHEBI:456216"/>
        <dbReference type="EC" id="2.7.1.167"/>
    </reaction>
</comment>
<comment type="catalytic activity">
    <reaction evidence="1">
        <text>D-glycero-beta-D-manno-heptose 1-phosphate + ATP + H(+) = ADP-D-glycero-beta-D-manno-heptose + diphosphate</text>
        <dbReference type="Rhea" id="RHEA:27465"/>
        <dbReference type="ChEBI" id="CHEBI:15378"/>
        <dbReference type="ChEBI" id="CHEBI:30616"/>
        <dbReference type="ChEBI" id="CHEBI:33019"/>
        <dbReference type="ChEBI" id="CHEBI:59967"/>
        <dbReference type="ChEBI" id="CHEBI:61593"/>
        <dbReference type="EC" id="2.7.7.70"/>
    </reaction>
</comment>
<comment type="pathway">
    <text evidence="1">Nucleotide-sugar biosynthesis; ADP-L-glycero-beta-D-manno-heptose biosynthesis; ADP-L-glycero-beta-D-manno-heptose from D-glycero-beta-D-manno-heptose 7-phosphate: step 1/4.</text>
</comment>
<comment type="pathway">
    <text evidence="1">Nucleotide-sugar biosynthesis; ADP-L-glycero-beta-D-manno-heptose biosynthesis; ADP-L-glycero-beta-D-manno-heptose from D-glycero-beta-D-manno-heptose 7-phosphate: step 3/4.</text>
</comment>
<comment type="subunit">
    <text evidence="1">Homodimer.</text>
</comment>
<comment type="similarity">
    <text evidence="1">In the N-terminal section; belongs to the carbohydrate kinase PfkB family.</text>
</comment>
<comment type="similarity">
    <text evidence="1">In the C-terminal section; belongs to the cytidylyltransferase family.</text>
</comment>
<evidence type="ECO:0000255" key="1">
    <source>
        <dbReference type="HAMAP-Rule" id="MF_01603"/>
    </source>
</evidence>